<sequence length="351" mass="39335">MASSLLLALLFLTLATVVNLKTDGPCPACWGATFDLESHRELLLDLAKKSILDKLHLSQRPILSRPVSREALKTALRRLRGTRAETLLEHDQRQEYEIISFADTGLSNINQTRLEFHFSDRTTGGVEVLQTRFMFFMQLPPNTTQTMNIRVLVLRPYDTNLTLTSQYMLQVDASGWYQLLLGPEAQAACSQGHLTLELVPESQLAHSSLILDGVSHRPFVAAQVRVEGKHRVRRRGINCQGLSRMCCRQEFFVDFREIGWHDWIIQPEGYAMNFCTGQCPLHVAGMPGISASFHTAVLNLLKANTDAGTARRGSCCVPTSRRPLSLLYYDRDSNIVKTDIPDMVVEACGCS</sequence>
<name>INHBC_RAT</name>
<reference key="1">
    <citation type="submission" date="1999-04" db="EMBL/GenBank/DDBJ databases">
        <title>Rat activin beta C and beta E: sequence and expression.</title>
        <authorList>
            <person name="Rossmanith W."/>
            <person name="Peter B."/>
            <person name="Schulte-Hermann R."/>
        </authorList>
    </citation>
    <scope>NUCLEOTIDE SEQUENCE [MRNA]</scope>
    <source>
        <strain>Wistar</strain>
    </source>
</reference>
<reference key="2">
    <citation type="journal article" date="2004" name="Genome Res.">
        <title>The status, quality, and expansion of the NIH full-length cDNA project: the Mammalian Gene Collection (MGC).</title>
        <authorList>
            <consortium name="The MGC Project Team"/>
        </authorList>
    </citation>
    <scope>NUCLEOTIDE SEQUENCE [LARGE SCALE MRNA]</scope>
    <source>
        <tissue>Liver</tissue>
    </source>
</reference>
<proteinExistence type="evidence at transcript level"/>
<keyword id="KW-1015">Disulfide bond</keyword>
<keyword id="KW-0325">Glycoprotein</keyword>
<keyword id="KW-0339">Growth factor</keyword>
<keyword id="KW-0372">Hormone</keyword>
<keyword id="KW-1185">Reference proteome</keyword>
<keyword id="KW-0964">Secreted</keyword>
<keyword id="KW-0732">Signal</keyword>
<protein>
    <recommendedName>
        <fullName>Inhibin beta C chain</fullName>
    </recommendedName>
    <alternativeName>
        <fullName>Activin beta-C chain</fullName>
    </alternativeName>
</protein>
<gene>
    <name type="primary">Inhbc</name>
</gene>
<accession>Q9WUK5</accession>
<accession>Q5FVS9</accession>
<comment type="function">
    <text>Inhibins and activins inhibit and activate, respectively, the secretion of follitropin by the pituitary gland. Inhibins/activins are involved in regulating a number of diverse functions such as hypothalamic and pituitary hormone secretion, gonadal hormone secretion, germ cell development and maturation, erythroid differentiation, insulin secretion, nerve cell survival, embryonic axial development or bone growth, depending on their subunit composition. Inhibins appear to oppose the functions of activins.</text>
</comment>
<comment type="subunit">
    <text evidence="1">Homodimeric or heterodimeric through association with alpha and beta subunits, linked by one or more disulfide bonds. Inhibins are heterodimers of one alpha and one beta subunit. Activins are homo- or heterodimers of beta subunits only (By similarity).</text>
</comment>
<comment type="subcellular location">
    <subcellularLocation>
        <location evidence="1">Secreted</location>
    </subcellularLocation>
</comment>
<comment type="similarity">
    <text evidence="3">Belongs to the TGF-beta family.</text>
</comment>
<evidence type="ECO:0000250" key="1"/>
<evidence type="ECO:0000255" key="2"/>
<evidence type="ECO:0000305" key="3"/>
<organism>
    <name type="scientific">Rattus norvegicus</name>
    <name type="common">Rat</name>
    <dbReference type="NCBI Taxonomy" id="10116"/>
    <lineage>
        <taxon>Eukaryota</taxon>
        <taxon>Metazoa</taxon>
        <taxon>Chordata</taxon>
        <taxon>Craniata</taxon>
        <taxon>Vertebrata</taxon>
        <taxon>Euteleostomi</taxon>
        <taxon>Mammalia</taxon>
        <taxon>Eutheria</taxon>
        <taxon>Euarchontoglires</taxon>
        <taxon>Glires</taxon>
        <taxon>Rodentia</taxon>
        <taxon>Myomorpha</taxon>
        <taxon>Muroidea</taxon>
        <taxon>Muridae</taxon>
        <taxon>Murinae</taxon>
        <taxon>Rattus</taxon>
    </lineage>
</organism>
<feature type="signal peptide" evidence="2">
    <location>
        <begin position="1"/>
        <end position="18"/>
    </location>
</feature>
<feature type="propeptide" id="PRO_0000033734" evidence="2">
    <location>
        <begin position="19"/>
        <end position="236"/>
    </location>
</feature>
<feature type="chain" id="PRO_0000033735" description="Inhibin beta C chain">
    <location>
        <begin position="237"/>
        <end position="351"/>
    </location>
</feature>
<feature type="glycosylation site" description="N-linked (GlcNAc...) asparagine" evidence="2">
    <location>
        <position position="110"/>
    </location>
</feature>
<feature type="glycosylation site" description="N-linked (GlcNAc...) asparagine" evidence="2">
    <location>
        <position position="142"/>
    </location>
</feature>
<feature type="glycosylation site" description="N-linked (GlcNAc...) asparagine" evidence="2">
    <location>
        <position position="160"/>
    </location>
</feature>
<feature type="disulfide bond" evidence="1">
    <location>
        <begin position="239"/>
        <end position="247"/>
    </location>
</feature>
<feature type="disulfide bond" evidence="1">
    <location>
        <begin position="246"/>
        <end position="316"/>
    </location>
</feature>
<feature type="disulfide bond" evidence="1">
    <location>
        <begin position="275"/>
        <end position="348"/>
    </location>
</feature>
<feature type="disulfide bond" evidence="1">
    <location>
        <begin position="279"/>
        <end position="350"/>
    </location>
</feature>
<feature type="disulfide bond" description="Interchain" evidence="1">
    <location>
        <position position="315"/>
    </location>
</feature>
<dbReference type="EMBL" id="AF140031">
    <property type="protein sequence ID" value="AAD30132.1"/>
    <property type="molecule type" value="mRNA"/>
</dbReference>
<dbReference type="EMBL" id="BC089799">
    <property type="protein sequence ID" value="AAH89799.1"/>
    <property type="molecule type" value="mRNA"/>
</dbReference>
<dbReference type="RefSeq" id="NP_072136.1">
    <property type="nucleotide sequence ID" value="NM_022614.2"/>
</dbReference>
<dbReference type="SMR" id="Q9WUK5"/>
<dbReference type="FunCoup" id="Q9WUK5">
    <property type="interactions" value="123"/>
</dbReference>
<dbReference type="STRING" id="10116.ENSRNOP00000010240"/>
<dbReference type="GlyCosmos" id="Q9WUK5">
    <property type="glycosylation" value="3 sites, No reported glycans"/>
</dbReference>
<dbReference type="GlyGen" id="Q9WUK5">
    <property type="glycosylation" value="3 sites"/>
</dbReference>
<dbReference type="PhosphoSitePlus" id="Q9WUK5"/>
<dbReference type="PaxDb" id="10116-ENSRNOP00000010240"/>
<dbReference type="Ensembl" id="ENSRNOT00000010240.6">
    <property type="protein sequence ID" value="ENSRNOP00000010240.3"/>
    <property type="gene ID" value="ENSRNOG00000007700.6"/>
</dbReference>
<dbReference type="GeneID" id="64549"/>
<dbReference type="KEGG" id="rno:64549"/>
<dbReference type="UCSC" id="RGD:621194">
    <property type="organism name" value="rat"/>
</dbReference>
<dbReference type="AGR" id="RGD:621194"/>
<dbReference type="CTD" id="3626"/>
<dbReference type="RGD" id="621194">
    <property type="gene designation" value="Inhbc"/>
</dbReference>
<dbReference type="eggNOG" id="KOG3900">
    <property type="taxonomic scope" value="Eukaryota"/>
</dbReference>
<dbReference type="GeneTree" id="ENSGT00940000160065"/>
<dbReference type="HOGENOM" id="CLU_020515_5_1_1"/>
<dbReference type="InParanoid" id="Q9WUK5"/>
<dbReference type="OMA" id="GIDCQGG"/>
<dbReference type="OrthoDB" id="6516235at2759"/>
<dbReference type="PhylomeDB" id="Q9WUK5"/>
<dbReference type="TreeFam" id="TF351791"/>
<dbReference type="Reactome" id="R-RNO-209822">
    <property type="pathway name" value="Glycoprotein hormones"/>
</dbReference>
<dbReference type="PRO" id="PR:Q9WUK5"/>
<dbReference type="Proteomes" id="UP000002494">
    <property type="component" value="Chromosome 7"/>
</dbReference>
<dbReference type="Bgee" id="ENSRNOG00000007700">
    <property type="expression patterns" value="Expressed in liver and 2 other cell types or tissues"/>
</dbReference>
<dbReference type="GO" id="GO:0005615">
    <property type="term" value="C:extracellular space"/>
    <property type="evidence" value="ECO:0000318"/>
    <property type="project" value="GO_Central"/>
</dbReference>
<dbReference type="GO" id="GO:0005125">
    <property type="term" value="F:cytokine activity"/>
    <property type="evidence" value="ECO:0000318"/>
    <property type="project" value="GO_Central"/>
</dbReference>
<dbReference type="GO" id="GO:0008083">
    <property type="term" value="F:growth factor activity"/>
    <property type="evidence" value="ECO:0007669"/>
    <property type="project" value="UniProtKB-KW"/>
</dbReference>
<dbReference type="GO" id="GO:0005179">
    <property type="term" value="F:hormone activity"/>
    <property type="evidence" value="ECO:0007669"/>
    <property type="project" value="UniProtKB-KW"/>
</dbReference>
<dbReference type="CDD" id="cd19406">
    <property type="entry name" value="TGF_beta_INHBC_E"/>
    <property type="match status" value="1"/>
</dbReference>
<dbReference type="FunFam" id="2.10.90.10:FF:000005">
    <property type="entry name" value="Inhibin beta A chain"/>
    <property type="match status" value="1"/>
</dbReference>
<dbReference type="Gene3D" id="2.60.120.970">
    <property type="match status" value="1"/>
</dbReference>
<dbReference type="Gene3D" id="2.10.90.10">
    <property type="entry name" value="Cystine-knot cytokines"/>
    <property type="match status" value="1"/>
</dbReference>
<dbReference type="InterPro" id="IPR029034">
    <property type="entry name" value="Cystine-knot_cytokine"/>
</dbReference>
<dbReference type="InterPro" id="IPR001318">
    <property type="entry name" value="Inhibin_betaC"/>
</dbReference>
<dbReference type="InterPro" id="IPR001839">
    <property type="entry name" value="TGF-b_C"/>
</dbReference>
<dbReference type="InterPro" id="IPR015615">
    <property type="entry name" value="TGF-beta-rel"/>
</dbReference>
<dbReference type="InterPro" id="IPR017948">
    <property type="entry name" value="TGFb_CS"/>
</dbReference>
<dbReference type="PANTHER" id="PTHR11848:SF130">
    <property type="entry name" value="INHIBIN BETA C CHAIN"/>
    <property type="match status" value="1"/>
</dbReference>
<dbReference type="PANTHER" id="PTHR11848">
    <property type="entry name" value="TGF-BETA FAMILY"/>
    <property type="match status" value="1"/>
</dbReference>
<dbReference type="Pfam" id="PF00019">
    <property type="entry name" value="TGF_beta"/>
    <property type="match status" value="1"/>
</dbReference>
<dbReference type="PRINTS" id="PR00672">
    <property type="entry name" value="INHIBINBC"/>
</dbReference>
<dbReference type="SMART" id="SM00204">
    <property type="entry name" value="TGFB"/>
    <property type="match status" value="1"/>
</dbReference>
<dbReference type="SUPFAM" id="SSF57501">
    <property type="entry name" value="Cystine-knot cytokines"/>
    <property type="match status" value="1"/>
</dbReference>
<dbReference type="PROSITE" id="PS00250">
    <property type="entry name" value="TGF_BETA_1"/>
    <property type="match status" value="1"/>
</dbReference>
<dbReference type="PROSITE" id="PS51362">
    <property type="entry name" value="TGF_BETA_2"/>
    <property type="match status" value="1"/>
</dbReference>